<proteinExistence type="inferred from homology"/>
<sequence length="81" mass="7990">MNPLISAASVIAAGLAVGLASIGPGVGQGTAAGQAVEGIARQPEAEGKIRGTLLLSLAFMEALTIYGLVVALALLFANPFV</sequence>
<reference key="1">
    <citation type="journal article" date="2005" name="Mol. Biol. Evol.">
        <title>Analysis of Acorus calamus chloroplast genome and its phylogenetic implications.</title>
        <authorList>
            <person name="Goremykin V.V."/>
            <person name="Holland B."/>
            <person name="Hirsch-Ernst K.I."/>
            <person name="Hellwig F.H."/>
        </authorList>
    </citation>
    <scope>NUCLEOTIDE SEQUENCE [LARGE SCALE GENOMIC DNA]</scope>
</reference>
<keyword id="KW-0066">ATP synthesis</keyword>
<keyword id="KW-0138">CF(0)</keyword>
<keyword id="KW-0150">Chloroplast</keyword>
<keyword id="KW-0375">Hydrogen ion transport</keyword>
<keyword id="KW-0406">Ion transport</keyword>
<keyword id="KW-0446">Lipid-binding</keyword>
<keyword id="KW-0472">Membrane</keyword>
<keyword id="KW-0934">Plastid</keyword>
<keyword id="KW-0793">Thylakoid</keyword>
<keyword id="KW-0812">Transmembrane</keyword>
<keyword id="KW-1133">Transmembrane helix</keyword>
<keyword id="KW-0813">Transport</keyword>
<dbReference type="EMBL" id="AJ879453">
    <property type="protein sequence ID" value="CAI53781.1"/>
    <property type="molecule type" value="Genomic_DNA"/>
</dbReference>
<dbReference type="RefSeq" id="YP_319752.1">
    <property type="nucleotide sequence ID" value="NC_007407.1"/>
</dbReference>
<dbReference type="SMR" id="Q3V547"/>
<dbReference type="GeneID" id="3677508"/>
<dbReference type="GO" id="GO:0009535">
    <property type="term" value="C:chloroplast thylakoid membrane"/>
    <property type="evidence" value="ECO:0007669"/>
    <property type="project" value="UniProtKB-SubCell"/>
</dbReference>
<dbReference type="GO" id="GO:0045259">
    <property type="term" value="C:proton-transporting ATP synthase complex"/>
    <property type="evidence" value="ECO:0007669"/>
    <property type="project" value="UniProtKB-KW"/>
</dbReference>
<dbReference type="GO" id="GO:0033177">
    <property type="term" value="C:proton-transporting two-sector ATPase complex, proton-transporting domain"/>
    <property type="evidence" value="ECO:0007669"/>
    <property type="project" value="InterPro"/>
</dbReference>
<dbReference type="GO" id="GO:0008289">
    <property type="term" value="F:lipid binding"/>
    <property type="evidence" value="ECO:0007669"/>
    <property type="project" value="UniProtKB-KW"/>
</dbReference>
<dbReference type="GO" id="GO:0046933">
    <property type="term" value="F:proton-transporting ATP synthase activity, rotational mechanism"/>
    <property type="evidence" value="ECO:0007669"/>
    <property type="project" value="UniProtKB-UniRule"/>
</dbReference>
<dbReference type="CDD" id="cd18183">
    <property type="entry name" value="ATP-synt_Fo_c_ATPH"/>
    <property type="match status" value="1"/>
</dbReference>
<dbReference type="FunFam" id="1.20.20.10:FF:000001">
    <property type="entry name" value="ATP synthase subunit c, chloroplastic"/>
    <property type="match status" value="1"/>
</dbReference>
<dbReference type="Gene3D" id="1.20.20.10">
    <property type="entry name" value="F1F0 ATP synthase subunit C"/>
    <property type="match status" value="1"/>
</dbReference>
<dbReference type="HAMAP" id="MF_01396">
    <property type="entry name" value="ATP_synth_c_bact"/>
    <property type="match status" value="1"/>
</dbReference>
<dbReference type="InterPro" id="IPR005953">
    <property type="entry name" value="ATP_synth_csu_bac/chlpt"/>
</dbReference>
<dbReference type="InterPro" id="IPR000454">
    <property type="entry name" value="ATP_synth_F0_csu"/>
</dbReference>
<dbReference type="InterPro" id="IPR020537">
    <property type="entry name" value="ATP_synth_F0_csu_DDCD_BS"/>
</dbReference>
<dbReference type="InterPro" id="IPR038662">
    <property type="entry name" value="ATP_synth_F0_csu_sf"/>
</dbReference>
<dbReference type="InterPro" id="IPR002379">
    <property type="entry name" value="ATPase_proteolipid_c-like_dom"/>
</dbReference>
<dbReference type="InterPro" id="IPR035921">
    <property type="entry name" value="F/V-ATP_Csub_sf"/>
</dbReference>
<dbReference type="NCBIfam" id="TIGR01260">
    <property type="entry name" value="ATP_synt_c"/>
    <property type="match status" value="1"/>
</dbReference>
<dbReference type="NCBIfam" id="NF005608">
    <property type="entry name" value="PRK07354.1"/>
    <property type="match status" value="1"/>
</dbReference>
<dbReference type="PANTHER" id="PTHR10031">
    <property type="entry name" value="ATP SYNTHASE LIPID-BINDING PROTEIN, MITOCHONDRIAL"/>
    <property type="match status" value="1"/>
</dbReference>
<dbReference type="PANTHER" id="PTHR10031:SF0">
    <property type="entry name" value="ATPASE PROTEIN 9"/>
    <property type="match status" value="1"/>
</dbReference>
<dbReference type="Pfam" id="PF00137">
    <property type="entry name" value="ATP-synt_C"/>
    <property type="match status" value="1"/>
</dbReference>
<dbReference type="PRINTS" id="PR00124">
    <property type="entry name" value="ATPASEC"/>
</dbReference>
<dbReference type="SUPFAM" id="SSF81333">
    <property type="entry name" value="F1F0 ATP synthase subunit C"/>
    <property type="match status" value="1"/>
</dbReference>
<dbReference type="PROSITE" id="PS00605">
    <property type="entry name" value="ATPASE_C"/>
    <property type="match status" value="1"/>
</dbReference>
<feature type="chain" id="PRO_0000362880" description="ATP synthase subunit c, chloroplastic">
    <location>
        <begin position="1"/>
        <end position="81"/>
    </location>
</feature>
<feature type="transmembrane region" description="Helical" evidence="1">
    <location>
        <begin position="3"/>
        <end position="23"/>
    </location>
</feature>
<feature type="transmembrane region" description="Helical" evidence="1">
    <location>
        <begin position="57"/>
        <end position="77"/>
    </location>
</feature>
<feature type="site" description="Reversibly protonated during proton transport" evidence="1">
    <location>
        <position position="61"/>
    </location>
</feature>
<accession>Q3V547</accession>
<protein>
    <recommendedName>
        <fullName evidence="1">ATP synthase subunit c, chloroplastic</fullName>
    </recommendedName>
    <alternativeName>
        <fullName evidence="1">ATP synthase F(0) sector subunit c</fullName>
    </alternativeName>
    <alternativeName>
        <fullName evidence="1">ATPase subunit III</fullName>
    </alternativeName>
    <alternativeName>
        <fullName evidence="1">F-type ATPase subunit c</fullName>
        <shortName evidence="1">F-ATPase subunit c</shortName>
    </alternativeName>
    <alternativeName>
        <fullName evidence="1">Lipid-binding protein</fullName>
    </alternativeName>
</protein>
<gene>
    <name evidence="1" type="primary">atpH</name>
</gene>
<comment type="function">
    <text evidence="1">F(1)F(0) ATP synthase produces ATP from ADP in the presence of a proton or sodium gradient. F-type ATPases consist of two structural domains, F(1) containing the extramembraneous catalytic core and F(0) containing the membrane proton channel, linked together by a central stalk and a peripheral stalk. During catalysis, ATP synthesis in the catalytic domain of F(1) is coupled via a rotary mechanism of the central stalk subunits to proton translocation.</text>
</comment>
<comment type="function">
    <text evidence="1">Key component of the F(0) channel; it plays a direct role in translocation across the membrane. A homomeric c-ring of between 10-14 subunits forms the central stalk rotor element with the F(1) delta and epsilon subunits.</text>
</comment>
<comment type="subunit">
    <text evidence="1">F-type ATPases have 2 components, F(1) - the catalytic core - and F(0) - the membrane proton channel. F(1) has five subunits: alpha(3), beta(3), gamma(1), delta(1), epsilon(1). F(0) has four main subunits: a(1), b(1), b'(1) and c(10-14). The alpha and beta chains form an alternating ring which encloses part of the gamma chain. F(1) is attached to F(0) by a central stalk formed by the gamma and epsilon chains, while a peripheral stalk is formed by the delta, b and b' chains.</text>
</comment>
<comment type="subcellular location">
    <subcellularLocation>
        <location evidence="1">Plastid</location>
        <location evidence="1">Chloroplast thylakoid membrane</location>
        <topology evidence="1">Multi-pass membrane protein</topology>
    </subcellularLocation>
</comment>
<comment type="miscellaneous">
    <text>In plastids the F-type ATPase is also known as CF(1)CF(0).</text>
</comment>
<comment type="similarity">
    <text evidence="1">Belongs to the ATPase C chain family.</text>
</comment>
<organism>
    <name type="scientific">Acorus calamus</name>
    <name type="common">Sweet flag</name>
    <dbReference type="NCBI Taxonomy" id="4465"/>
    <lineage>
        <taxon>Eukaryota</taxon>
        <taxon>Viridiplantae</taxon>
        <taxon>Streptophyta</taxon>
        <taxon>Embryophyta</taxon>
        <taxon>Tracheophyta</taxon>
        <taxon>Spermatophyta</taxon>
        <taxon>Magnoliopsida</taxon>
        <taxon>Liliopsida</taxon>
        <taxon>Acoraceae</taxon>
        <taxon>Acorus</taxon>
    </lineage>
</organism>
<geneLocation type="chloroplast"/>
<name>ATPH_ACOCL</name>
<evidence type="ECO:0000255" key="1">
    <source>
        <dbReference type="HAMAP-Rule" id="MF_01396"/>
    </source>
</evidence>